<organism>
    <name type="scientific">Staphylococcus aureus (strain N315)</name>
    <dbReference type="NCBI Taxonomy" id="158879"/>
    <lineage>
        <taxon>Bacteria</taxon>
        <taxon>Bacillati</taxon>
        <taxon>Bacillota</taxon>
        <taxon>Bacilli</taxon>
        <taxon>Bacillales</taxon>
        <taxon>Staphylococcaceae</taxon>
        <taxon>Staphylococcus</taxon>
    </lineage>
</organism>
<gene>
    <name type="ordered locus">SA2274</name>
</gene>
<proteinExistence type="inferred from homology"/>
<protein>
    <recommendedName>
        <fullName>Uncharacterized protein SA2274</fullName>
    </recommendedName>
</protein>
<keyword id="KW-1003">Cell membrane</keyword>
<keyword id="KW-0472">Membrane</keyword>
<keyword id="KW-0812">Transmembrane</keyword>
<keyword id="KW-1133">Transmembrane helix</keyword>
<name>Y2274_STAAN</name>
<accession>Q7A3L2</accession>
<evidence type="ECO:0000255" key="1"/>
<evidence type="ECO:0000305" key="2"/>
<feature type="chain" id="PRO_0000282140" description="Uncharacterized protein SA2274">
    <location>
        <begin position="1"/>
        <end position="257"/>
    </location>
</feature>
<feature type="transmembrane region" description="Helical" evidence="1">
    <location>
        <begin position="7"/>
        <end position="27"/>
    </location>
</feature>
<reference key="1">
    <citation type="journal article" date="2001" name="Lancet">
        <title>Whole genome sequencing of meticillin-resistant Staphylococcus aureus.</title>
        <authorList>
            <person name="Kuroda M."/>
            <person name="Ohta T."/>
            <person name="Uchiyama I."/>
            <person name="Baba T."/>
            <person name="Yuzawa H."/>
            <person name="Kobayashi I."/>
            <person name="Cui L."/>
            <person name="Oguchi A."/>
            <person name="Aoki K."/>
            <person name="Nagai Y."/>
            <person name="Lian J.-Q."/>
            <person name="Ito T."/>
            <person name="Kanamori M."/>
            <person name="Matsumaru H."/>
            <person name="Maruyama A."/>
            <person name="Murakami H."/>
            <person name="Hosoyama A."/>
            <person name="Mizutani-Ui Y."/>
            <person name="Takahashi N.K."/>
            <person name="Sawano T."/>
            <person name="Inoue R."/>
            <person name="Kaito C."/>
            <person name="Sekimizu K."/>
            <person name="Hirakawa H."/>
            <person name="Kuhara S."/>
            <person name="Goto S."/>
            <person name="Yabuzaki J."/>
            <person name="Kanehisa M."/>
            <person name="Yamashita A."/>
            <person name="Oshima K."/>
            <person name="Furuya K."/>
            <person name="Yoshino C."/>
            <person name="Shiba T."/>
            <person name="Hattori M."/>
            <person name="Ogasawara N."/>
            <person name="Hayashi H."/>
            <person name="Hiramatsu K."/>
        </authorList>
    </citation>
    <scope>NUCLEOTIDE SEQUENCE [LARGE SCALE GENOMIC DNA]</scope>
    <source>
        <strain>N315</strain>
    </source>
</reference>
<comment type="subcellular location">
    <subcellularLocation>
        <location evidence="2">Cell membrane</location>
        <topology evidence="2">Single-pass membrane protein</topology>
    </subcellularLocation>
</comment>
<comment type="similarity">
    <text evidence="2">Belongs to the staphylococcal tandem lipoprotein family.</text>
</comment>
<dbReference type="EMBL" id="BA000018">
    <property type="protein sequence ID" value="BAB43577.1"/>
    <property type="molecule type" value="Genomic_DNA"/>
</dbReference>
<dbReference type="PIR" id="G90051">
    <property type="entry name" value="G90051"/>
</dbReference>
<dbReference type="RefSeq" id="WP_000972280.1">
    <property type="nucleotide sequence ID" value="NC_002745.2"/>
</dbReference>
<dbReference type="SMR" id="Q7A3L2"/>
<dbReference type="EnsemblBacteria" id="BAB43577">
    <property type="protein sequence ID" value="BAB43577"/>
    <property type="gene ID" value="BAB43577"/>
</dbReference>
<dbReference type="KEGG" id="sau:SA2274"/>
<dbReference type="HOGENOM" id="CLU_071589_0_1_9"/>
<dbReference type="GO" id="GO:0005886">
    <property type="term" value="C:plasma membrane"/>
    <property type="evidence" value="ECO:0007669"/>
    <property type="project" value="UniProtKB-SubCell"/>
</dbReference>
<dbReference type="Gene3D" id="2.50.20.40">
    <property type="match status" value="1"/>
</dbReference>
<dbReference type="InterPro" id="IPR007595">
    <property type="entry name" value="Csa"/>
</dbReference>
<dbReference type="InterPro" id="IPR038641">
    <property type="entry name" value="Csa_sf"/>
</dbReference>
<dbReference type="NCBIfam" id="TIGR01742">
    <property type="entry name" value="SA_tandem_lipo"/>
    <property type="match status" value="1"/>
</dbReference>
<dbReference type="Pfam" id="PF04507">
    <property type="entry name" value="DUF576"/>
    <property type="match status" value="1"/>
</dbReference>
<sequence length="257" mass="30133">MMHSKKLMLGICLVLLIILIVGYVIMTKINSRSAQIKDTFNQTLKLYPTKNLEDFYDKEGFRDQEFEKGDKGNWIVDSEMVIELKDKKMESRSMVLYINRNTRTTKGNFIVRELWEDSKGYAQSKDTKYPVKMEHNRIIPTKPIADDKLRKEIENFKFFVQYGDFKDINDYKDGDISYNPNVPSYSAKYQLKNDDYNVKQLRKRYNIPTNKAPKLLLKGDGDLKGSSIGSKNLEFTFVENKEENIYFSDSINFKPTE</sequence>